<protein>
    <recommendedName>
        <fullName>Pollen allergen Amb a 3</fullName>
    </recommendedName>
    <alternativeName>
        <fullName>Allergen Amb a III</fullName>
    </alternativeName>
    <alternativeName>
        <fullName>Allergen Ra3</fullName>
    </alternativeName>
    <allergenName>Amb a 3</allergenName>
</protein>
<proteinExistence type="evidence at protein level"/>
<dbReference type="PIR" id="A00313">
    <property type="entry name" value="ARRA3"/>
</dbReference>
<dbReference type="SMR" id="P00304"/>
<dbReference type="Allergome" id="27">
    <property type="allergen name" value="Amb a 3"/>
</dbReference>
<dbReference type="Allergome" id="3068">
    <property type="allergen name" value="Amb a 3.0101"/>
</dbReference>
<dbReference type="iPTMnet" id="P00304"/>
<dbReference type="GO" id="GO:0005886">
    <property type="term" value="C:plasma membrane"/>
    <property type="evidence" value="ECO:0007669"/>
    <property type="project" value="TreeGrafter"/>
</dbReference>
<dbReference type="GO" id="GO:0009055">
    <property type="term" value="F:electron transfer activity"/>
    <property type="evidence" value="ECO:0007669"/>
    <property type="project" value="InterPro"/>
</dbReference>
<dbReference type="Gene3D" id="2.60.40.420">
    <property type="entry name" value="Cupredoxins - blue copper proteins"/>
    <property type="match status" value="1"/>
</dbReference>
<dbReference type="InterPro" id="IPR008972">
    <property type="entry name" value="Cupredoxin"/>
</dbReference>
<dbReference type="InterPro" id="IPR039391">
    <property type="entry name" value="Phytocyanin-like"/>
</dbReference>
<dbReference type="InterPro" id="IPR003245">
    <property type="entry name" value="Phytocyanin_dom"/>
</dbReference>
<dbReference type="PANTHER" id="PTHR33021">
    <property type="entry name" value="BLUE COPPER PROTEIN"/>
    <property type="match status" value="1"/>
</dbReference>
<dbReference type="PANTHER" id="PTHR33021:SF499">
    <property type="entry name" value="OS12G0150500 PROTEIN"/>
    <property type="match status" value="1"/>
</dbReference>
<dbReference type="Pfam" id="PF02298">
    <property type="entry name" value="Cu_bind_like"/>
    <property type="match status" value="1"/>
</dbReference>
<dbReference type="SUPFAM" id="SSF49503">
    <property type="entry name" value="Cupredoxins"/>
    <property type="match status" value="1"/>
</dbReference>
<dbReference type="PROSITE" id="PS51485">
    <property type="entry name" value="PHYTOCYANIN"/>
    <property type="match status" value="1"/>
</dbReference>
<reference key="1">
    <citation type="journal article" date="1980" name="Biochemistry">
        <title>Amino acid sequence of ragweed allergen Ra3.</title>
        <authorList>
            <person name="Klapper D.G."/>
            <person name="Goodfriend L."/>
            <person name="Capra J.D."/>
        </authorList>
    </citation>
    <scope>PROTEIN SEQUENCE</scope>
    <scope>DISULFIDE BOND</scope>
    <scope>GLYCOSYLATION AT ASN-41 AND SER-84</scope>
    <source>
        <tissue>Pollen</tissue>
    </source>
</reference>
<sequence length="101" mass="11375">GKVYLVGGPELGGWKLQSDPRAYALWSARQQFKTTDVLWFNFTTGEDSVAEVWREEAYHACDIKDPIRLEPGGPDRFTLLTPGSHFICTKDQKFVACVPGR</sequence>
<organism>
    <name type="scientific">Ambrosia artemisiifolia var. elatior</name>
    <name type="common">Short ragweed</name>
    <name type="synonym">Ambrosia elatior</name>
    <dbReference type="NCBI Taxonomy" id="4215"/>
    <lineage>
        <taxon>Eukaryota</taxon>
        <taxon>Viridiplantae</taxon>
        <taxon>Streptophyta</taxon>
        <taxon>Embryophyta</taxon>
        <taxon>Tracheophyta</taxon>
        <taxon>Spermatophyta</taxon>
        <taxon>Magnoliopsida</taxon>
        <taxon>eudicotyledons</taxon>
        <taxon>Gunneridae</taxon>
        <taxon>Pentapetalae</taxon>
        <taxon>asterids</taxon>
        <taxon>campanulids</taxon>
        <taxon>Asterales</taxon>
        <taxon>Asteraceae</taxon>
        <taxon>Asteroideae</taxon>
        <taxon>Heliantheae alliance</taxon>
        <taxon>Heliantheae</taxon>
        <taxon>Ambrosia</taxon>
    </lineage>
</organism>
<feature type="chain" id="PRO_0000085558" description="Pollen allergen Amb a 3">
    <location>
        <begin position="1"/>
        <end position="101"/>
    </location>
</feature>
<feature type="domain" description="Phytocyanin" evidence="1">
    <location>
        <begin position="2"/>
        <end position="101"/>
    </location>
</feature>
<feature type="modified residue" description="Cysteine derivative">
    <location>
        <position position="97"/>
    </location>
</feature>
<feature type="modified residue" description="Blocked carboxyl end (Arg)">
    <location>
        <position position="101"/>
    </location>
</feature>
<feature type="glycosylation site" description="N-linked (GlcNAc...) asparagine" evidence="2">
    <location>
        <position position="41"/>
    </location>
</feature>
<feature type="glycosylation site" description="O-linked (Hex) serine" evidence="2">
    <location>
        <position position="84"/>
    </location>
</feature>
<feature type="disulfide bond" evidence="3">
    <location>
        <begin position="61"/>
        <end position="88"/>
    </location>
</feature>
<keyword id="KW-0020">Allergen</keyword>
<keyword id="KW-0903">Direct protein sequencing</keyword>
<keyword id="KW-1015">Disulfide bond</keyword>
<keyword id="KW-0325">Glycoprotein</keyword>
<accession>P00304</accession>
<name>MPAA3_AMBEL</name>
<evidence type="ECO:0000255" key="1">
    <source>
        <dbReference type="PROSITE-ProRule" id="PRU00818"/>
    </source>
</evidence>
<evidence type="ECO:0000269" key="2">
    <source>
    </source>
</evidence>
<evidence type="ECO:0000305" key="3">
    <source>
    </source>
</evidence>
<comment type="PTM">
    <text evidence="2">The identity of the saccharide is not reported (PubMed:7459340). The sugar attached to Ser-84 is represented simply as Hex.</text>
</comment>
<comment type="PTM">
    <text evidence="2">Cys-97 sulfhydryl group is modified but does not form an interchain disulfide bond.</text>
</comment>
<comment type="allergen">
    <text>Causes an allergic reaction in human.</text>
</comment>